<protein>
    <recommendedName>
        <fullName>UPF0758 protein Smlt0399</fullName>
    </recommendedName>
</protein>
<keyword id="KW-0378">Hydrolase</keyword>
<keyword id="KW-0479">Metal-binding</keyword>
<keyword id="KW-0482">Metalloprotease</keyword>
<keyword id="KW-0645">Protease</keyword>
<keyword id="KW-1185">Reference proteome</keyword>
<keyword id="KW-0862">Zinc</keyword>
<dbReference type="EMBL" id="AM743169">
    <property type="protein sequence ID" value="CAQ43998.1"/>
    <property type="molecule type" value="Genomic_DNA"/>
</dbReference>
<dbReference type="SMR" id="B2FJW1"/>
<dbReference type="EnsemblBacteria" id="CAQ43998">
    <property type="protein sequence ID" value="CAQ43998"/>
    <property type="gene ID" value="Smlt0399"/>
</dbReference>
<dbReference type="KEGG" id="sml:Smlt0399"/>
<dbReference type="eggNOG" id="COG2003">
    <property type="taxonomic scope" value="Bacteria"/>
</dbReference>
<dbReference type="HOGENOM" id="CLU_073529_0_2_6"/>
<dbReference type="Proteomes" id="UP000008840">
    <property type="component" value="Chromosome"/>
</dbReference>
<dbReference type="GO" id="GO:0046872">
    <property type="term" value="F:metal ion binding"/>
    <property type="evidence" value="ECO:0007669"/>
    <property type="project" value="UniProtKB-KW"/>
</dbReference>
<dbReference type="GO" id="GO:0008237">
    <property type="term" value="F:metallopeptidase activity"/>
    <property type="evidence" value="ECO:0007669"/>
    <property type="project" value="UniProtKB-KW"/>
</dbReference>
<dbReference type="GO" id="GO:0006508">
    <property type="term" value="P:proteolysis"/>
    <property type="evidence" value="ECO:0007669"/>
    <property type="project" value="UniProtKB-KW"/>
</dbReference>
<dbReference type="CDD" id="cd08071">
    <property type="entry name" value="MPN_DUF2466"/>
    <property type="match status" value="1"/>
</dbReference>
<dbReference type="Gene3D" id="3.40.140.10">
    <property type="entry name" value="Cytidine Deaminase, domain 2"/>
    <property type="match status" value="1"/>
</dbReference>
<dbReference type="InterPro" id="IPR037518">
    <property type="entry name" value="MPN"/>
</dbReference>
<dbReference type="InterPro" id="IPR025657">
    <property type="entry name" value="RadC_JAB"/>
</dbReference>
<dbReference type="InterPro" id="IPR001405">
    <property type="entry name" value="UPF0758"/>
</dbReference>
<dbReference type="InterPro" id="IPR020891">
    <property type="entry name" value="UPF0758_CS"/>
</dbReference>
<dbReference type="InterPro" id="IPR046778">
    <property type="entry name" value="UPF0758_N"/>
</dbReference>
<dbReference type="NCBIfam" id="NF000642">
    <property type="entry name" value="PRK00024.1"/>
    <property type="match status" value="1"/>
</dbReference>
<dbReference type="NCBIfam" id="TIGR00608">
    <property type="entry name" value="radc"/>
    <property type="match status" value="1"/>
</dbReference>
<dbReference type="PANTHER" id="PTHR30471">
    <property type="entry name" value="DNA REPAIR PROTEIN RADC"/>
    <property type="match status" value="1"/>
</dbReference>
<dbReference type="PANTHER" id="PTHR30471:SF3">
    <property type="entry name" value="UPF0758 PROTEIN YEES-RELATED"/>
    <property type="match status" value="1"/>
</dbReference>
<dbReference type="Pfam" id="PF04002">
    <property type="entry name" value="RadC"/>
    <property type="match status" value="1"/>
</dbReference>
<dbReference type="Pfam" id="PF20582">
    <property type="entry name" value="UPF0758_N"/>
    <property type="match status" value="1"/>
</dbReference>
<dbReference type="PROSITE" id="PS50249">
    <property type="entry name" value="MPN"/>
    <property type="match status" value="1"/>
</dbReference>
<dbReference type="PROSITE" id="PS01302">
    <property type="entry name" value="UPF0758"/>
    <property type="match status" value="1"/>
</dbReference>
<reference key="1">
    <citation type="journal article" date="2008" name="Genome Biol.">
        <title>The complete genome, comparative and functional analysis of Stenotrophomonas maltophilia reveals an organism heavily shielded by drug resistance determinants.</title>
        <authorList>
            <person name="Crossman L.C."/>
            <person name="Gould V.C."/>
            <person name="Dow J.M."/>
            <person name="Vernikos G.S."/>
            <person name="Okazaki A."/>
            <person name="Sebaihia M."/>
            <person name="Saunders D."/>
            <person name="Arrowsmith C."/>
            <person name="Carver T."/>
            <person name="Peters N."/>
            <person name="Adlem E."/>
            <person name="Kerhornou A."/>
            <person name="Lord A."/>
            <person name="Murphy L."/>
            <person name="Seeger K."/>
            <person name="Squares R."/>
            <person name="Rutter S."/>
            <person name="Quail M.A."/>
            <person name="Rajandream M.A."/>
            <person name="Harris D."/>
            <person name="Churcher C."/>
            <person name="Bentley S.D."/>
            <person name="Parkhill J."/>
            <person name="Thomson N.R."/>
            <person name="Avison M.B."/>
        </authorList>
    </citation>
    <scope>NUCLEOTIDE SEQUENCE [LARGE SCALE GENOMIC DNA]</scope>
    <source>
        <strain>K279a</strain>
    </source>
</reference>
<organism>
    <name type="scientific">Stenotrophomonas maltophilia (strain K279a)</name>
    <dbReference type="NCBI Taxonomy" id="522373"/>
    <lineage>
        <taxon>Bacteria</taxon>
        <taxon>Pseudomonadati</taxon>
        <taxon>Pseudomonadota</taxon>
        <taxon>Gammaproteobacteria</taxon>
        <taxon>Lysobacterales</taxon>
        <taxon>Lysobacteraceae</taxon>
        <taxon>Stenotrophomonas</taxon>
        <taxon>Stenotrophomonas maltophilia group</taxon>
    </lineage>
</organism>
<evidence type="ECO:0000255" key="1">
    <source>
        <dbReference type="PROSITE-ProRule" id="PRU01182"/>
    </source>
</evidence>
<evidence type="ECO:0000305" key="2"/>
<sequence length="234" mass="25551">MPIHDWPEQERPREKLIARGPTALSDAELLALFLGSGFGGRDAVQTARDLLQAHGPLRVLLDRPAAELARLPGLGPARSCTLAAGLELAHRYLAAELEHGEAVGNNPAAVGRYLQHRLRGQAREVFMALFLDNRHRLIACEELFHGTINAAPVYPREVVRRALLHNAAAVILSHNHPSGDPEPSSADTRITDELQQALAMVDVRLLDHFVVGEGRPVSFAERGLLSPPQPRLFG</sequence>
<comment type="similarity">
    <text evidence="2">Belongs to the UPF0758 family.</text>
</comment>
<accession>B2FJW1</accession>
<gene>
    <name type="ordered locus">Smlt0399</name>
</gene>
<proteinExistence type="inferred from homology"/>
<feature type="chain" id="PRO_1000089855" description="UPF0758 protein Smlt0399">
    <location>
        <begin position="1"/>
        <end position="234"/>
    </location>
</feature>
<feature type="domain" description="MPN" evidence="1">
    <location>
        <begin position="103"/>
        <end position="225"/>
    </location>
</feature>
<feature type="short sequence motif" description="JAMM motif" evidence="1">
    <location>
        <begin position="174"/>
        <end position="187"/>
    </location>
</feature>
<feature type="binding site" evidence="1">
    <location>
        <position position="174"/>
    </location>
    <ligand>
        <name>Zn(2+)</name>
        <dbReference type="ChEBI" id="CHEBI:29105"/>
        <note>catalytic</note>
    </ligand>
</feature>
<feature type="binding site" evidence="1">
    <location>
        <position position="176"/>
    </location>
    <ligand>
        <name>Zn(2+)</name>
        <dbReference type="ChEBI" id="CHEBI:29105"/>
        <note>catalytic</note>
    </ligand>
</feature>
<feature type="binding site" evidence="1">
    <location>
        <position position="187"/>
    </location>
    <ligand>
        <name>Zn(2+)</name>
        <dbReference type="ChEBI" id="CHEBI:29105"/>
        <note>catalytic</note>
    </ligand>
</feature>
<name>Y399_STRMK</name>